<sequence length="363" mass="38613">MSGEGKRLMVMAGGTGGHVFPGLAVAHHLMAQGWQVRWLGTADRMEADLVPKHGIEIDFIRISGLRGKGIWAQLSAPIRIFQAVRQARAIMRRYQPDVVLGMGGYVSGPGGLAAWLCGIPVVLHEQNGIAGLTNRWLSHIAKKVLQAFPGAFPKADVVGNPVRTDVLALPVPETRLADRSGPVRVLVVGGSQGARVLNQTLPGVAAQLGERVTIWHQVGKGALSTVQQAYQDVGQTQHKITEFIDDMAAAYAWADVVVCRSGALTVSEIAAAGLPALFVPFQHKDRQQYWNALPLEKAGAAKIIEQPQFNVAAVSEVLSGWDRATLLTMAQKARAVAIPDATDRVAAEVSAAAGSRATHVAHG</sequence>
<gene>
    <name evidence="1" type="primary">murG</name>
    <name type="ordered locus">PC1_3592</name>
</gene>
<name>MURG_PECCP</name>
<organism>
    <name type="scientific">Pectobacterium carotovorum subsp. carotovorum (strain PC1)</name>
    <dbReference type="NCBI Taxonomy" id="561230"/>
    <lineage>
        <taxon>Bacteria</taxon>
        <taxon>Pseudomonadati</taxon>
        <taxon>Pseudomonadota</taxon>
        <taxon>Gammaproteobacteria</taxon>
        <taxon>Enterobacterales</taxon>
        <taxon>Pectobacteriaceae</taxon>
        <taxon>Pectobacterium</taxon>
    </lineage>
</organism>
<evidence type="ECO:0000255" key="1">
    <source>
        <dbReference type="HAMAP-Rule" id="MF_00033"/>
    </source>
</evidence>
<accession>C6DEU3</accession>
<dbReference type="EC" id="2.4.1.227" evidence="1"/>
<dbReference type="EMBL" id="CP001657">
    <property type="protein sequence ID" value="ACT14607.1"/>
    <property type="molecule type" value="Genomic_DNA"/>
</dbReference>
<dbReference type="RefSeq" id="WP_015841725.1">
    <property type="nucleotide sequence ID" value="NC_012917.1"/>
</dbReference>
<dbReference type="SMR" id="C6DEU3"/>
<dbReference type="STRING" id="561230.PC1_3592"/>
<dbReference type="CAZy" id="GT28">
    <property type="family name" value="Glycosyltransferase Family 28"/>
</dbReference>
<dbReference type="KEGG" id="pct:PC1_3592"/>
<dbReference type="eggNOG" id="COG0707">
    <property type="taxonomic scope" value="Bacteria"/>
</dbReference>
<dbReference type="HOGENOM" id="CLU_037404_2_0_6"/>
<dbReference type="OrthoDB" id="9808936at2"/>
<dbReference type="UniPathway" id="UPA00219"/>
<dbReference type="Proteomes" id="UP000002736">
    <property type="component" value="Chromosome"/>
</dbReference>
<dbReference type="GO" id="GO:0005886">
    <property type="term" value="C:plasma membrane"/>
    <property type="evidence" value="ECO:0007669"/>
    <property type="project" value="UniProtKB-SubCell"/>
</dbReference>
<dbReference type="GO" id="GO:0051991">
    <property type="term" value="F:UDP-N-acetyl-D-glucosamine:N-acetylmuramoyl-L-alanyl-D-glutamyl-meso-2,6-diaminopimelyl-D-alanyl-D-alanine-diphosphoundecaprenol 4-beta-N-acetylglucosaminlytransferase activity"/>
    <property type="evidence" value="ECO:0007669"/>
    <property type="project" value="RHEA"/>
</dbReference>
<dbReference type="GO" id="GO:0050511">
    <property type="term" value="F:undecaprenyldiphospho-muramoylpentapeptide beta-N-acetylglucosaminyltransferase activity"/>
    <property type="evidence" value="ECO:0007669"/>
    <property type="project" value="UniProtKB-UniRule"/>
</dbReference>
<dbReference type="GO" id="GO:0005975">
    <property type="term" value="P:carbohydrate metabolic process"/>
    <property type="evidence" value="ECO:0007669"/>
    <property type="project" value="InterPro"/>
</dbReference>
<dbReference type="GO" id="GO:0051301">
    <property type="term" value="P:cell division"/>
    <property type="evidence" value="ECO:0007669"/>
    <property type="project" value="UniProtKB-KW"/>
</dbReference>
<dbReference type="GO" id="GO:0071555">
    <property type="term" value="P:cell wall organization"/>
    <property type="evidence" value="ECO:0007669"/>
    <property type="project" value="UniProtKB-KW"/>
</dbReference>
<dbReference type="GO" id="GO:0030259">
    <property type="term" value="P:lipid glycosylation"/>
    <property type="evidence" value="ECO:0007669"/>
    <property type="project" value="UniProtKB-UniRule"/>
</dbReference>
<dbReference type="GO" id="GO:0009252">
    <property type="term" value="P:peptidoglycan biosynthetic process"/>
    <property type="evidence" value="ECO:0007669"/>
    <property type="project" value="UniProtKB-UniRule"/>
</dbReference>
<dbReference type="GO" id="GO:0008360">
    <property type="term" value="P:regulation of cell shape"/>
    <property type="evidence" value="ECO:0007669"/>
    <property type="project" value="UniProtKB-KW"/>
</dbReference>
<dbReference type="CDD" id="cd03785">
    <property type="entry name" value="GT28_MurG"/>
    <property type="match status" value="1"/>
</dbReference>
<dbReference type="FunFam" id="3.40.50.2000:FF:000016">
    <property type="entry name" value="UDP-N-acetylglucosamine--N-acetylmuramyl-(pentapeptide) pyrophosphoryl-undecaprenol N-acetylglucosamine transferase"/>
    <property type="match status" value="1"/>
</dbReference>
<dbReference type="FunFam" id="3.40.50.2000:FF:000018">
    <property type="entry name" value="UDP-N-acetylglucosamine--N-acetylmuramyl-(pentapeptide) pyrophosphoryl-undecaprenol N-acetylglucosamine transferase"/>
    <property type="match status" value="1"/>
</dbReference>
<dbReference type="Gene3D" id="3.40.50.2000">
    <property type="entry name" value="Glycogen Phosphorylase B"/>
    <property type="match status" value="2"/>
</dbReference>
<dbReference type="HAMAP" id="MF_00033">
    <property type="entry name" value="MurG"/>
    <property type="match status" value="1"/>
</dbReference>
<dbReference type="InterPro" id="IPR006009">
    <property type="entry name" value="GlcNAc_MurG"/>
</dbReference>
<dbReference type="InterPro" id="IPR007235">
    <property type="entry name" value="Glyco_trans_28_C"/>
</dbReference>
<dbReference type="InterPro" id="IPR004276">
    <property type="entry name" value="GlycoTrans_28_N"/>
</dbReference>
<dbReference type="NCBIfam" id="TIGR01133">
    <property type="entry name" value="murG"/>
    <property type="match status" value="1"/>
</dbReference>
<dbReference type="PANTHER" id="PTHR21015:SF22">
    <property type="entry name" value="GLYCOSYLTRANSFERASE"/>
    <property type="match status" value="1"/>
</dbReference>
<dbReference type="PANTHER" id="PTHR21015">
    <property type="entry name" value="UDP-N-ACETYLGLUCOSAMINE--N-ACETYLMURAMYL-(PENTAPEPTIDE) PYROPHOSPHORYL-UNDECAPRENOL N-ACETYLGLUCOSAMINE TRANSFERASE 1"/>
    <property type="match status" value="1"/>
</dbReference>
<dbReference type="Pfam" id="PF04101">
    <property type="entry name" value="Glyco_tran_28_C"/>
    <property type="match status" value="1"/>
</dbReference>
<dbReference type="Pfam" id="PF03033">
    <property type="entry name" value="Glyco_transf_28"/>
    <property type="match status" value="1"/>
</dbReference>
<dbReference type="SUPFAM" id="SSF53756">
    <property type="entry name" value="UDP-Glycosyltransferase/glycogen phosphorylase"/>
    <property type="match status" value="1"/>
</dbReference>
<comment type="function">
    <text evidence="1">Cell wall formation. Catalyzes the transfer of a GlcNAc subunit on undecaprenyl-pyrophosphoryl-MurNAc-pentapeptide (lipid intermediate I) to form undecaprenyl-pyrophosphoryl-MurNAc-(pentapeptide)GlcNAc (lipid intermediate II).</text>
</comment>
<comment type="catalytic activity">
    <reaction evidence="1">
        <text>di-trans,octa-cis-undecaprenyl diphospho-N-acetyl-alpha-D-muramoyl-L-alanyl-D-glutamyl-meso-2,6-diaminopimeloyl-D-alanyl-D-alanine + UDP-N-acetyl-alpha-D-glucosamine = di-trans,octa-cis-undecaprenyl diphospho-[N-acetyl-alpha-D-glucosaminyl-(1-&gt;4)]-N-acetyl-alpha-D-muramoyl-L-alanyl-D-glutamyl-meso-2,6-diaminopimeloyl-D-alanyl-D-alanine + UDP + H(+)</text>
        <dbReference type="Rhea" id="RHEA:31227"/>
        <dbReference type="ChEBI" id="CHEBI:15378"/>
        <dbReference type="ChEBI" id="CHEBI:57705"/>
        <dbReference type="ChEBI" id="CHEBI:58223"/>
        <dbReference type="ChEBI" id="CHEBI:61387"/>
        <dbReference type="ChEBI" id="CHEBI:61388"/>
        <dbReference type="EC" id="2.4.1.227"/>
    </reaction>
</comment>
<comment type="pathway">
    <text evidence="1">Cell wall biogenesis; peptidoglycan biosynthesis.</text>
</comment>
<comment type="subcellular location">
    <subcellularLocation>
        <location evidence="1">Cell inner membrane</location>
        <topology evidence="1">Peripheral membrane protein</topology>
        <orientation evidence="1">Cytoplasmic side</orientation>
    </subcellularLocation>
</comment>
<comment type="similarity">
    <text evidence="1">Belongs to the glycosyltransferase 28 family. MurG subfamily.</text>
</comment>
<reference key="1">
    <citation type="submission" date="2009-07" db="EMBL/GenBank/DDBJ databases">
        <title>Complete sequence of Pectobacterium carotovorum subsp. carotovorum PC1.</title>
        <authorList>
            <consortium name="US DOE Joint Genome Institute"/>
            <person name="Lucas S."/>
            <person name="Copeland A."/>
            <person name="Lapidus A."/>
            <person name="Glavina del Rio T."/>
            <person name="Tice H."/>
            <person name="Bruce D."/>
            <person name="Goodwin L."/>
            <person name="Pitluck S."/>
            <person name="Munk A.C."/>
            <person name="Brettin T."/>
            <person name="Detter J.C."/>
            <person name="Han C."/>
            <person name="Tapia R."/>
            <person name="Larimer F."/>
            <person name="Land M."/>
            <person name="Hauser L."/>
            <person name="Kyrpides N."/>
            <person name="Mikhailova N."/>
            <person name="Balakrishnan V."/>
            <person name="Glasner J."/>
            <person name="Perna N.T."/>
        </authorList>
    </citation>
    <scope>NUCLEOTIDE SEQUENCE [LARGE SCALE GENOMIC DNA]</scope>
    <source>
        <strain>PC1</strain>
    </source>
</reference>
<proteinExistence type="inferred from homology"/>
<protein>
    <recommendedName>
        <fullName evidence="1">UDP-N-acetylglucosamine--N-acetylmuramyl-(pentapeptide) pyrophosphoryl-undecaprenol N-acetylglucosamine transferase</fullName>
        <ecNumber evidence="1">2.4.1.227</ecNumber>
    </recommendedName>
    <alternativeName>
        <fullName evidence="1">Undecaprenyl-PP-MurNAc-pentapeptide-UDPGlcNAc GlcNAc transferase</fullName>
    </alternativeName>
</protein>
<keyword id="KW-0131">Cell cycle</keyword>
<keyword id="KW-0132">Cell division</keyword>
<keyword id="KW-0997">Cell inner membrane</keyword>
<keyword id="KW-1003">Cell membrane</keyword>
<keyword id="KW-0133">Cell shape</keyword>
<keyword id="KW-0961">Cell wall biogenesis/degradation</keyword>
<keyword id="KW-0328">Glycosyltransferase</keyword>
<keyword id="KW-0472">Membrane</keyword>
<keyword id="KW-0573">Peptidoglycan synthesis</keyword>
<keyword id="KW-0808">Transferase</keyword>
<feature type="chain" id="PRO_1000202025" description="UDP-N-acetylglucosamine--N-acetylmuramyl-(pentapeptide) pyrophosphoryl-undecaprenol N-acetylglucosamine transferase">
    <location>
        <begin position="1"/>
        <end position="363"/>
    </location>
</feature>
<feature type="binding site" evidence="1">
    <location>
        <begin position="15"/>
        <end position="17"/>
    </location>
    <ligand>
        <name>UDP-N-acetyl-alpha-D-glucosamine</name>
        <dbReference type="ChEBI" id="CHEBI:57705"/>
    </ligand>
</feature>
<feature type="binding site" evidence="1">
    <location>
        <position position="127"/>
    </location>
    <ligand>
        <name>UDP-N-acetyl-alpha-D-glucosamine</name>
        <dbReference type="ChEBI" id="CHEBI:57705"/>
    </ligand>
</feature>
<feature type="binding site" evidence="1">
    <location>
        <position position="163"/>
    </location>
    <ligand>
        <name>UDP-N-acetyl-alpha-D-glucosamine</name>
        <dbReference type="ChEBI" id="CHEBI:57705"/>
    </ligand>
</feature>
<feature type="binding site" evidence="1">
    <location>
        <position position="191"/>
    </location>
    <ligand>
        <name>UDP-N-acetyl-alpha-D-glucosamine</name>
        <dbReference type="ChEBI" id="CHEBI:57705"/>
    </ligand>
</feature>
<feature type="binding site" evidence="1">
    <location>
        <position position="244"/>
    </location>
    <ligand>
        <name>UDP-N-acetyl-alpha-D-glucosamine</name>
        <dbReference type="ChEBI" id="CHEBI:57705"/>
    </ligand>
</feature>
<feature type="binding site" evidence="1">
    <location>
        <begin position="263"/>
        <end position="268"/>
    </location>
    <ligand>
        <name>UDP-N-acetyl-alpha-D-glucosamine</name>
        <dbReference type="ChEBI" id="CHEBI:57705"/>
    </ligand>
</feature>
<feature type="binding site" evidence="1">
    <location>
        <position position="288"/>
    </location>
    <ligand>
        <name>UDP-N-acetyl-alpha-D-glucosamine</name>
        <dbReference type="ChEBI" id="CHEBI:57705"/>
    </ligand>
</feature>